<evidence type="ECO:0000250" key="1"/>
<evidence type="ECO:0000255" key="2">
    <source>
        <dbReference type="HAMAP-Rule" id="MF_01227"/>
    </source>
</evidence>
<sequence>MTTNYIFVTGGVVSSLGKGIAAASLAAILEARGLNVTIMKLDPYINVDPGTMSPIQHGEVFVTEDGAETDLDLGHYERFIRTKMSRRNNFTTGRIYSDVLRKERRGDYLGATVQVIPHITNAIKERVLEGGEGHDVVLVEIGGTVGDIESLPFLEAIRQMAVEIGREHTLFMHLTLVPYMAASGEVKTKPTQHSVKELLSIGIQPDILICRSDRAVPANERAKIALFCNVPEKAVISLKDVDSIYKIPGLLKSQGLDDYICKRFSLNCPEANLSEWEQVIFEEANPVSEVTIGMVGKYIELPDAYKSVIEALKHGGLKNRVSVNIKLIDSQDVETRGVEILKGLDAILVPGGFGYRGVEGMITTARFARENNIPYLGICLGMQVALIDYARHVANMENANSTEFVPDCKYPVVALITEWRDENGNVEVRSEKSDLGGTMRLGAQQCQLVDDSLVRQLYNAPTIVERHRHRYEVNNMLLKQIEDAGLRVAGRSGDDQLVEIIEVPNHPWFVACQFHPEFTSTPRDGHPLFAGFVKAASEFQKRQAK</sequence>
<proteinExistence type="inferred from homology"/>
<protein>
    <recommendedName>
        <fullName evidence="2">CTP synthase</fullName>
        <ecNumber evidence="2">6.3.4.2</ecNumber>
    </recommendedName>
    <alternativeName>
        <fullName evidence="2">Cytidine 5'-triphosphate synthase</fullName>
    </alternativeName>
    <alternativeName>
        <fullName evidence="2">Cytidine triphosphate synthetase</fullName>
        <shortName evidence="2">CTP synthetase</shortName>
        <shortName evidence="2">CTPS</shortName>
    </alternativeName>
    <alternativeName>
        <fullName evidence="2">UTP--ammonia ligase</fullName>
    </alternativeName>
</protein>
<feature type="initiator methionine" description="Removed" evidence="1">
    <location>
        <position position="1"/>
    </location>
</feature>
<feature type="chain" id="PRO_0000138185" description="CTP synthase">
    <location>
        <begin position="2"/>
        <end position="545"/>
    </location>
</feature>
<feature type="domain" description="Glutamine amidotransferase type-1" evidence="2">
    <location>
        <begin position="291"/>
        <end position="542"/>
    </location>
</feature>
<feature type="region of interest" description="Amidoligase domain" evidence="2">
    <location>
        <begin position="2"/>
        <end position="266"/>
    </location>
</feature>
<feature type="active site" description="Nucleophile; for glutamine hydrolysis" evidence="2">
    <location>
        <position position="379"/>
    </location>
</feature>
<feature type="active site" evidence="2">
    <location>
        <position position="515"/>
    </location>
</feature>
<feature type="active site" evidence="2">
    <location>
        <position position="517"/>
    </location>
</feature>
<feature type="binding site" evidence="2">
    <location>
        <position position="14"/>
    </location>
    <ligand>
        <name>CTP</name>
        <dbReference type="ChEBI" id="CHEBI:37563"/>
        <note>allosteric inhibitor</note>
    </ligand>
</feature>
<feature type="binding site" evidence="2">
    <location>
        <position position="14"/>
    </location>
    <ligand>
        <name>UTP</name>
        <dbReference type="ChEBI" id="CHEBI:46398"/>
    </ligand>
</feature>
<feature type="binding site" evidence="2">
    <location>
        <begin position="15"/>
        <end position="20"/>
    </location>
    <ligand>
        <name>ATP</name>
        <dbReference type="ChEBI" id="CHEBI:30616"/>
    </ligand>
</feature>
<feature type="binding site" evidence="2">
    <location>
        <position position="72"/>
    </location>
    <ligand>
        <name>ATP</name>
        <dbReference type="ChEBI" id="CHEBI:30616"/>
    </ligand>
</feature>
<feature type="binding site" evidence="2">
    <location>
        <position position="72"/>
    </location>
    <ligand>
        <name>Mg(2+)</name>
        <dbReference type="ChEBI" id="CHEBI:18420"/>
    </ligand>
</feature>
<feature type="binding site" evidence="2">
    <location>
        <position position="140"/>
    </location>
    <ligand>
        <name>Mg(2+)</name>
        <dbReference type="ChEBI" id="CHEBI:18420"/>
    </ligand>
</feature>
<feature type="binding site" evidence="2">
    <location>
        <begin position="147"/>
        <end position="149"/>
    </location>
    <ligand>
        <name>CTP</name>
        <dbReference type="ChEBI" id="CHEBI:37563"/>
        <note>allosteric inhibitor</note>
    </ligand>
</feature>
<feature type="binding site" evidence="2">
    <location>
        <begin position="187"/>
        <end position="192"/>
    </location>
    <ligand>
        <name>CTP</name>
        <dbReference type="ChEBI" id="CHEBI:37563"/>
        <note>allosteric inhibitor</note>
    </ligand>
</feature>
<feature type="binding site" evidence="2">
    <location>
        <begin position="187"/>
        <end position="192"/>
    </location>
    <ligand>
        <name>UTP</name>
        <dbReference type="ChEBI" id="CHEBI:46398"/>
    </ligand>
</feature>
<feature type="binding site" evidence="2">
    <location>
        <position position="223"/>
    </location>
    <ligand>
        <name>CTP</name>
        <dbReference type="ChEBI" id="CHEBI:37563"/>
        <note>allosteric inhibitor</note>
    </ligand>
</feature>
<feature type="binding site" evidence="2">
    <location>
        <position position="223"/>
    </location>
    <ligand>
        <name>UTP</name>
        <dbReference type="ChEBI" id="CHEBI:46398"/>
    </ligand>
</feature>
<feature type="binding site" evidence="2">
    <location>
        <begin position="239"/>
        <end position="241"/>
    </location>
    <ligand>
        <name>ATP</name>
        <dbReference type="ChEBI" id="CHEBI:30616"/>
    </ligand>
</feature>
<feature type="binding site" evidence="2">
    <location>
        <position position="352"/>
    </location>
    <ligand>
        <name>L-glutamine</name>
        <dbReference type="ChEBI" id="CHEBI:58359"/>
    </ligand>
</feature>
<feature type="binding site" evidence="2">
    <location>
        <begin position="380"/>
        <end position="383"/>
    </location>
    <ligand>
        <name>L-glutamine</name>
        <dbReference type="ChEBI" id="CHEBI:58359"/>
    </ligand>
</feature>
<feature type="binding site" evidence="2">
    <location>
        <position position="403"/>
    </location>
    <ligand>
        <name>L-glutamine</name>
        <dbReference type="ChEBI" id="CHEBI:58359"/>
    </ligand>
</feature>
<feature type="binding site" evidence="2">
    <location>
        <position position="470"/>
    </location>
    <ligand>
        <name>L-glutamine</name>
        <dbReference type="ChEBI" id="CHEBI:58359"/>
    </ligand>
</feature>
<gene>
    <name evidence="2" type="primary">pyrG</name>
    <name type="ordered locus">c3345</name>
</gene>
<keyword id="KW-0067">ATP-binding</keyword>
<keyword id="KW-0315">Glutamine amidotransferase</keyword>
<keyword id="KW-0436">Ligase</keyword>
<keyword id="KW-0460">Magnesium</keyword>
<keyword id="KW-0479">Metal-binding</keyword>
<keyword id="KW-0547">Nucleotide-binding</keyword>
<keyword id="KW-0665">Pyrimidine biosynthesis</keyword>
<keyword id="KW-1185">Reference proteome</keyword>
<accession>P0A7E6</accession>
<accession>P08398</accession>
<name>PYRG_ECOL6</name>
<dbReference type="EC" id="6.3.4.2" evidence="2"/>
<dbReference type="EMBL" id="AE014075">
    <property type="protein sequence ID" value="AAN81793.1"/>
    <property type="molecule type" value="Genomic_DNA"/>
</dbReference>
<dbReference type="RefSeq" id="WP_000210878.1">
    <property type="nucleotide sequence ID" value="NZ_CP051263.1"/>
</dbReference>
<dbReference type="SMR" id="P0A7E6"/>
<dbReference type="STRING" id="199310.c3345"/>
<dbReference type="GeneID" id="93779218"/>
<dbReference type="KEGG" id="ecc:c3345"/>
<dbReference type="eggNOG" id="COG0504">
    <property type="taxonomic scope" value="Bacteria"/>
</dbReference>
<dbReference type="HOGENOM" id="CLU_011675_5_0_6"/>
<dbReference type="BioCyc" id="ECOL199310:C3345-MONOMER"/>
<dbReference type="UniPathway" id="UPA00159">
    <property type="reaction ID" value="UER00277"/>
</dbReference>
<dbReference type="Proteomes" id="UP000001410">
    <property type="component" value="Chromosome"/>
</dbReference>
<dbReference type="GO" id="GO:0005829">
    <property type="term" value="C:cytosol"/>
    <property type="evidence" value="ECO:0007669"/>
    <property type="project" value="TreeGrafter"/>
</dbReference>
<dbReference type="GO" id="GO:0005524">
    <property type="term" value="F:ATP binding"/>
    <property type="evidence" value="ECO:0007669"/>
    <property type="project" value="UniProtKB-KW"/>
</dbReference>
<dbReference type="GO" id="GO:0003883">
    <property type="term" value="F:CTP synthase activity"/>
    <property type="evidence" value="ECO:0007669"/>
    <property type="project" value="UniProtKB-UniRule"/>
</dbReference>
<dbReference type="GO" id="GO:0004359">
    <property type="term" value="F:glutaminase activity"/>
    <property type="evidence" value="ECO:0007669"/>
    <property type="project" value="RHEA"/>
</dbReference>
<dbReference type="GO" id="GO:0042802">
    <property type="term" value="F:identical protein binding"/>
    <property type="evidence" value="ECO:0007669"/>
    <property type="project" value="TreeGrafter"/>
</dbReference>
<dbReference type="GO" id="GO:0046872">
    <property type="term" value="F:metal ion binding"/>
    <property type="evidence" value="ECO:0007669"/>
    <property type="project" value="UniProtKB-KW"/>
</dbReference>
<dbReference type="GO" id="GO:0044210">
    <property type="term" value="P:'de novo' CTP biosynthetic process"/>
    <property type="evidence" value="ECO:0007669"/>
    <property type="project" value="UniProtKB-UniRule"/>
</dbReference>
<dbReference type="GO" id="GO:0019856">
    <property type="term" value="P:pyrimidine nucleobase biosynthetic process"/>
    <property type="evidence" value="ECO:0007669"/>
    <property type="project" value="TreeGrafter"/>
</dbReference>
<dbReference type="CDD" id="cd03113">
    <property type="entry name" value="CTPS_N"/>
    <property type="match status" value="1"/>
</dbReference>
<dbReference type="CDD" id="cd01746">
    <property type="entry name" value="GATase1_CTP_Synthase"/>
    <property type="match status" value="1"/>
</dbReference>
<dbReference type="FunFam" id="3.40.50.300:FF:000009">
    <property type="entry name" value="CTP synthase"/>
    <property type="match status" value="1"/>
</dbReference>
<dbReference type="FunFam" id="3.40.50.880:FF:000002">
    <property type="entry name" value="CTP synthase"/>
    <property type="match status" value="1"/>
</dbReference>
<dbReference type="Gene3D" id="3.40.50.880">
    <property type="match status" value="1"/>
</dbReference>
<dbReference type="Gene3D" id="3.40.50.300">
    <property type="entry name" value="P-loop containing nucleotide triphosphate hydrolases"/>
    <property type="match status" value="1"/>
</dbReference>
<dbReference type="HAMAP" id="MF_01227">
    <property type="entry name" value="PyrG"/>
    <property type="match status" value="1"/>
</dbReference>
<dbReference type="InterPro" id="IPR029062">
    <property type="entry name" value="Class_I_gatase-like"/>
</dbReference>
<dbReference type="InterPro" id="IPR004468">
    <property type="entry name" value="CTP_synthase"/>
</dbReference>
<dbReference type="InterPro" id="IPR017456">
    <property type="entry name" value="CTP_synthase_N"/>
</dbReference>
<dbReference type="InterPro" id="IPR017926">
    <property type="entry name" value="GATASE"/>
</dbReference>
<dbReference type="InterPro" id="IPR033828">
    <property type="entry name" value="GATase1_CTP_Synthase"/>
</dbReference>
<dbReference type="InterPro" id="IPR027417">
    <property type="entry name" value="P-loop_NTPase"/>
</dbReference>
<dbReference type="NCBIfam" id="NF003792">
    <property type="entry name" value="PRK05380.1"/>
    <property type="match status" value="1"/>
</dbReference>
<dbReference type="NCBIfam" id="TIGR00337">
    <property type="entry name" value="PyrG"/>
    <property type="match status" value="1"/>
</dbReference>
<dbReference type="PANTHER" id="PTHR11550">
    <property type="entry name" value="CTP SYNTHASE"/>
    <property type="match status" value="1"/>
</dbReference>
<dbReference type="PANTHER" id="PTHR11550:SF0">
    <property type="entry name" value="CTP SYNTHASE-RELATED"/>
    <property type="match status" value="1"/>
</dbReference>
<dbReference type="Pfam" id="PF06418">
    <property type="entry name" value="CTP_synth_N"/>
    <property type="match status" value="1"/>
</dbReference>
<dbReference type="Pfam" id="PF00117">
    <property type="entry name" value="GATase"/>
    <property type="match status" value="1"/>
</dbReference>
<dbReference type="SUPFAM" id="SSF52317">
    <property type="entry name" value="Class I glutamine amidotransferase-like"/>
    <property type="match status" value="1"/>
</dbReference>
<dbReference type="SUPFAM" id="SSF52540">
    <property type="entry name" value="P-loop containing nucleoside triphosphate hydrolases"/>
    <property type="match status" value="1"/>
</dbReference>
<dbReference type="PROSITE" id="PS51273">
    <property type="entry name" value="GATASE_TYPE_1"/>
    <property type="match status" value="1"/>
</dbReference>
<comment type="function">
    <text evidence="2">Catalyzes the ATP-dependent amination of UTP to CTP with either L-glutamine or ammonia as the source of nitrogen. Regulates intracellular CTP levels through interactions with the four ribonucleotide triphosphates.</text>
</comment>
<comment type="catalytic activity">
    <reaction evidence="2">
        <text>UTP + L-glutamine + ATP + H2O = CTP + L-glutamate + ADP + phosphate + 2 H(+)</text>
        <dbReference type="Rhea" id="RHEA:26426"/>
        <dbReference type="ChEBI" id="CHEBI:15377"/>
        <dbReference type="ChEBI" id="CHEBI:15378"/>
        <dbReference type="ChEBI" id="CHEBI:29985"/>
        <dbReference type="ChEBI" id="CHEBI:30616"/>
        <dbReference type="ChEBI" id="CHEBI:37563"/>
        <dbReference type="ChEBI" id="CHEBI:43474"/>
        <dbReference type="ChEBI" id="CHEBI:46398"/>
        <dbReference type="ChEBI" id="CHEBI:58359"/>
        <dbReference type="ChEBI" id="CHEBI:456216"/>
        <dbReference type="EC" id="6.3.4.2"/>
    </reaction>
</comment>
<comment type="catalytic activity">
    <reaction evidence="2">
        <text>L-glutamine + H2O = L-glutamate + NH4(+)</text>
        <dbReference type="Rhea" id="RHEA:15889"/>
        <dbReference type="ChEBI" id="CHEBI:15377"/>
        <dbReference type="ChEBI" id="CHEBI:28938"/>
        <dbReference type="ChEBI" id="CHEBI:29985"/>
        <dbReference type="ChEBI" id="CHEBI:58359"/>
    </reaction>
</comment>
<comment type="catalytic activity">
    <reaction evidence="2">
        <text>UTP + NH4(+) + ATP = CTP + ADP + phosphate + 2 H(+)</text>
        <dbReference type="Rhea" id="RHEA:16597"/>
        <dbReference type="ChEBI" id="CHEBI:15378"/>
        <dbReference type="ChEBI" id="CHEBI:28938"/>
        <dbReference type="ChEBI" id="CHEBI:30616"/>
        <dbReference type="ChEBI" id="CHEBI:37563"/>
        <dbReference type="ChEBI" id="CHEBI:43474"/>
        <dbReference type="ChEBI" id="CHEBI:46398"/>
        <dbReference type="ChEBI" id="CHEBI:456216"/>
    </reaction>
</comment>
<comment type="activity regulation">
    <text evidence="2">Allosterically activated by GTP, when glutamine is the substrate; GTP has no effect on the reaction when ammonia is the substrate. The allosteric effector GTP functions by stabilizing the protein conformation that binds the tetrahedral intermediate(s) formed during glutamine hydrolysis. Inhibited by the product CTP, via allosteric rather than competitive inhibition.</text>
</comment>
<comment type="pathway">
    <text evidence="2">Pyrimidine metabolism; CTP biosynthesis via de novo pathway; CTP from UDP: step 2/2.</text>
</comment>
<comment type="subunit">
    <text evidence="2">Homotetramer.</text>
</comment>
<comment type="miscellaneous">
    <text evidence="2">CTPSs have evolved a hybrid strategy for distinguishing between UTP and CTP. The overlapping regions of the product feedback inhibitory and substrate sites recognize a common feature in both compounds, the triphosphate moiety. To differentiate isosteric substrate and product pyrimidine rings, an additional pocket far from the expected kinase/ligase catalytic site, specifically recognizes the cytosine and ribose portions of the product inhibitor.</text>
</comment>
<comment type="similarity">
    <text evidence="2">Belongs to the CTP synthase family.</text>
</comment>
<organism>
    <name type="scientific">Escherichia coli O6:H1 (strain CFT073 / ATCC 700928 / UPEC)</name>
    <dbReference type="NCBI Taxonomy" id="199310"/>
    <lineage>
        <taxon>Bacteria</taxon>
        <taxon>Pseudomonadati</taxon>
        <taxon>Pseudomonadota</taxon>
        <taxon>Gammaproteobacteria</taxon>
        <taxon>Enterobacterales</taxon>
        <taxon>Enterobacteriaceae</taxon>
        <taxon>Escherichia</taxon>
    </lineage>
</organism>
<reference key="1">
    <citation type="journal article" date="2002" name="Proc. Natl. Acad. Sci. U.S.A.">
        <title>Extensive mosaic structure revealed by the complete genome sequence of uropathogenic Escherichia coli.</title>
        <authorList>
            <person name="Welch R.A."/>
            <person name="Burland V."/>
            <person name="Plunkett G. III"/>
            <person name="Redford P."/>
            <person name="Roesch P."/>
            <person name="Rasko D."/>
            <person name="Buckles E.L."/>
            <person name="Liou S.-R."/>
            <person name="Boutin A."/>
            <person name="Hackett J."/>
            <person name="Stroud D."/>
            <person name="Mayhew G.F."/>
            <person name="Rose D.J."/>
            <person name="Zhou S."/>
            <person name="Schwartz D.C."/>
            <person name="Perna N.T."/>
            <person name="Mobley H.L.T."/>
            <person name="Donnenberg M.S."/>
            <person name="Blattner F.R."/>
        </authorList>
    </citation>
    <scope>NUCLEOTIDE SEQUENCE [LARGE SCALE GENOMIC DNA]</scope>
    <source>
        <strain>CFT073 / ATCC 700928 / UPEC</strain>
    </source>
</reference>